<reference key="1">
    <citation type="journal article" date="2007" name="Environ. Microbiol.">
        <title>Whole-genome analysis of the ammonia-oxidizing bacterium, Nitrosomonas eutropha C91: implications for niche adaptation.</title>
        <authorList>
            <person name="Stein L.Y."/>
            <person name="Arp D.J."/>
            <person name="Berube P.M."/>
            <person name="Chain P.S."/>
            <person name="Hauser L."/>
            <person name="Jetten M.S."/>
            <person name="Klotz M.G."/>
            <person name="Larimer F.W."/>
            <person name="Norton J.M."/>
            <person name="Op den Camp H.J.M."/>
            <person name="Shin M."/>
            <person name="Wei X."/>
        </authorList>
    </citation>
    <scope>NUCLEOTIDE SEQUENCE [LARGE SCALE GENOMIC DNA]</scope>
    <source>
        <strain>DSM 101675 / C91 / Nm57</strain>
    </source>
</reference>
<proteinExistence type="inferred from homology"/>
<name>RL20_NITEC</name>
<organism>
    <name type="scientific">Nitrosomonas eutropha (strain DSM 101675 / C91 / Nm57)</name>
    <dbReference type="NCBI Taxonomy" id="335283"/>
    <lineage>
        <taxon>Bacteria</taxon>
        <taxon>Pseudomonadati</taxon>
        <taxon>Pseudomonadota</taxon>
        <taxon>Betaproteobacteria</taxon>
        <taxon>Nitrosomonadales</taxon>
        <taxon>Nitrosomonadaceae</taxon>
        <taxon>Nitrosomonas</taxon>
    </lineage>
</organism>
<evidence type="ECO:0000255" key="1">
    <source>
        <dbReference type="HAMAP-Rule" id="MF_00382"/>
    </source>
</evidence>
<evidence type="ECO:0000305" key="2"/>
<sequence length="119" mass="13756">MPRVKRSVTARARHKKVLKLAKGYRGRRKNIYRIAKQAVMKAGQYAYRDRRQRKRQFRALWIARINAAVRELGMTYSTFMNGLKKSGIGLDRKVLADLAVFDKAAFEKITNQVKTSLAN</sequence>
<dbReference type="EMBL" id="CP000450">
    <property type="protein sequence ID" value="ABI60545.1"/>
    <property type="molecule type" value="Genomic_DNA"/>
</dbReference>
<dbReference type="RefSeq" id="WP_011635318.1">
    <property type="nucleotide sequence ID" value="NC_008344.1"/>
</dbReference>
<dbReference type="SMR" id="Q0ADN7"/>
<dbReference type="STRING" id="335283.Neut_2328"/>
<dbReference type="KEGG" id="net:Neut_2328"/>
<dbReference type="eggNOG" id="COG0292">
    <property type="taxonomic scope" value="Bacteria"/>
</dbReference>
<dbReference type="HOGENOM" id="CLU_123265_0_1_4"/>
<dbReference type="OrthoDB" id="9808966at2"/>
<dbReference type="Proteomes" id="UP000001966">
    <property type="component" value="Chromosome"/>
</dbReference>
<dbReference type="GO" id="GO:1990904">
    <property type="term" value="C:ribonucleoprotein complex"/>
    <property type="evidence" value="ECO:0007669"/>
    <property type="project" value="UniProtKB-KW"/>
</dbReference>
<dbReference type="GO" id="GO:0005840">
    <property type="term" value="C:ribosome"/>
    <property type="evidence" value="ECO:0007669"/>
    <property type="project" value="UniProtKB-KW"/>
</dbReference>
<dbReference type="GO" id="GO:0019843">
    <property type="term" value="F:rRNA binding"/>
    <property type="evidence" value="ECO:0007669"/>
    <property type="project" value="UniProtKB-UniRule"/>
</dbReference>
<dbReference type="GO" id="GO:0003735">
    <property type="term" value="F:structural constituent of ribosome"/>
    <property type="evidence" value="ECO:0007669"/>
    <property type="project" value="InterPro"/>
</dbReference>
<dbReference type="GO" id="GO:0000027">
    <property type="term" value="P:ribosomal large subunit assembly"/>
    <property type="evidence" value="ECO:0007669"/>
    <property type="project" value="UniProtKB-UniRule"/>
</dbReference>
<dbReference type="GO" id="GO:0006412">
    <property type="term" value="P:translation"/>
    <property type="evidence" value="ECO:0007669"/>
    <property type="project" value="InterPro"/>
</dbReference>
<dbReference type="CDD" id="cd07026">
    <property type="entry name" value="Ribosomal_L20"/>
    <property type="match status" value="1"/>
</dbReference>
<dbReference type="FunFam" id="1.10.1900.20:FF:000001">
    <property type="entry name" value="50S ribosomal protein L20"/>
    <property type="match status" value="1"/>
</dbReference>
<dbReference type="Gene3D" id="6.10.160.10">
    <property type="match status" value="1"/>
</dbReference>
<dbReference type="Gene3D" id="1.10.1900.20">
    <property type="entry name" value="Ribosomal protein L20"/>
    <property type="match status" value="1"/>
</dbReference>
<dbReference type="HAMAP" id="MF_00382">
    <property type="entry name" value="Ribosomal_bL20"/>
    <property type="match status" value="1"/>
</dbReference>
<dbReference type="InterPro" id="IPR005813">
    <property type="entry name" value="Ribosomal_bL20"/>
</dbReference>
<dbReference type="InterPro" id="IPR049946">
    <property type="entry name" value="RIBOSOMAL_L20_CS"/>
</dbReference>
<dbReference type="InterPro" id="IPR035566">
    <property type="entry name" value="Ribosomal_protein_bL20_C"/>
</dbReference>
<dbReference type="NCBIfam" id="TIGR01032">
    <property type="entry name" value="rplT_bact"/>
    <property type="match status" value="1"/>
</dbReference>
<dbReference type="PANTHER" id="PTHR10986">
    <property type="entry name" value="39S RIBOSOMAL PROTEIN L20"/>
    <property type="match status" value="1"/>
</dbReference>
<dbReference type="Pfam" id="PF00453">
    <property type="entry name" value="Ribosomal_L20"/>
    <property type="match status" value="1"/>
</dbReference>
<dbReference type="PRINTS" id="PR00062">
    <property type="entry name" value="RIBOSOMALL20"/>
</dbReference>
<dbReference type="SUPFAM" id="SSF74731">
    <property type="entry name" value="Ribosomal protein L20"/>
    <property type="match status" value="1"/>
</dbReference>
<dbReference type="PROSITE" id="PS00937">
    <property type="entry name" value="RIBOSOMAL_L20"/>
    <property type="match status" value="1"/>
</dbReference>
<accession>Q0ADN7</accession>
<comment type="function">
    <text evidence="1">Binds directly to 23S ribosomal RNA and is necessary for the in vitro assembly process of the 50S ribosomal subunit. It is not involved in the protein synthesizing functions of that subunit.</text>
</comment>
<comment type="similarity">
    <text evidence="1">Belongs to the bacterial ribosomal protein bL20 family.</text>
</comment>
<feature type="chain" id="PRO_1000049021" description="Large ribosomal subunit protein bL20">
    <location>
        <begin position="1"/>
        <end position="119"/>
    </location>
</feature>
<protein>
    <recommendedName>
        <fullName evidence="1">Large ribosomal subunit protein bL20</fullName>
    </recommendedName>
    <alternativeName>
        <fullName evidence="2">50S ribosomal protein L20</fullName>
    </alternativeName>
</protein>
<gene>
    <name evidence="1" type="primary">rplT</name>
    <name type="ordered locus">Neut_2328</name>
</gene>
<keyword id="KW-0687">Ribonucleoprotein</keyword>
<keyword id="KW-0689">Ribosomal protein</keyword>
<keyword id="KW-0694">RNA-binding</keyword>
<keyword id="KW-0699">rRNA-binding</keyword>